<comment type="subcellular location">
    <subcellularLocation>
        <location evidence="2">Cell membrane</location>
        <topology evidence="2">Multi-pass membrane protein</topology>
    </subcellularLocation>
</comment>
<comment type="similarity">
    <text evidence="2">Belongs to the TrkH potassium transport family.</text>
</comment>
<reference key="1">
    <citation type="journal article" date="1996" name="Nucleic Acids Res.">
        <title>Complete sequence analysis of the genome of the bacterium Mycoplasma pneumoniae.</title>
        <authorList>
            <person name="Himmelreich R."/>
            <person name="Hilbert H."/>
            <person name="Plagens H."/>
            <person name="Pirkl E."/>
            <person name="Li B.-C."/>
            <person name="Herrmann R."/>
        </authorList>
    </citation>
    <scope>NUCLEOTIDE SEQUENCE [LARGE SCALE GENOMIC DNA]</scope>
    <source>
        <strain>ATCC 29342 / M129 / Subtype 1</strain>
    </source>
</reference>
<gene>
    <name type="ordered locus">MPN_460</name>
    <name type="ORF">H08_orf565</name>
    <name type="ORF">MP381</name>
</gene>
<accession>P75323</accession>
<proteinExistence type="inferred from homology"/>
<protein>
    <recommendedName>
        <fullName>Uncharacterized cation transporter MG322 homolog</fullName>
    </recommendedName>
</protein>
<name>Y460_MYCPN</name>
<feature type="chain" id="PRO_0000070482" description="Uncharacterized cation transporter MG322 homolog">
    <location>
        <begin position="1"/>
        <end position="565"/>
    </location>
</feature>
<feature type="transmembrane region" description="Helical" evidence="1">
    <location>
        <begin position="28"/>
        <end position="48"/>
    </location>
</feature>
<feature type="transmembrane region" description="Helical" evidence="1">
    <location>
        <begin position="73"/>
        <end position="93"/>
    </location>
</feature>
<feature type="transmembrane region" description="Helical" evidence="1">
    <location>
        <begin position="109"/>
        <end position="129"/>
    </location>
</feature>
<feature type="transmembrane region" description="Helical" evidence="1">
    <location>
        <begin position="169"/>
        <end position="189"/>
    </location>
</feature>
<feature type="transmembrane region" description="Helical" evidence="1">
    <location>
        <begin position="262"/>
        <end position="282"/>
    </location>
</feature>
<feature type="transmembrane region" description="Helical" evidence="1">
    <location>
        <begin position="315"/>
        <end position="335"/>
    </location>
</feature>
<feature type="transmembrane region" description="Helical" evidence="1">
    <location>
        <begin position="364"/>
        <end position="384"/>
    </location>
</feature>
<feature type="transmembrane region" description="Helical" evidence="1">
    <location>
        <begin position="393"/>
        <end position="413"/>
    </location>
</feature>
<feature type="transmembrane region" description="Helical" evidence="1">
    <location>
        <begin position="461"/>
        <end position="481"/>
    </location>
</feature>
<feature type="transmembrane region" description="Helical" evidence="1">
    <location>
        <begin position="526"/>
        <end position="546"/>
    </location>
</feature>
<organism>
    <name type="scientific">Mycoplasma pneumoniae (strain ATCC 29342 / M129 / Subtype 1)</name>
    <name type="common">Mycoplasmoides pneumoniae</name>
    <dbReference type="NCBI Taxonomy" id="272634"/>
    <lineage>
        <taxon>Bacteria</taxon>
        <taxon>Bacillati</taxon>
        <taxon>Mycoplasmatota</taxon>
        <taxon>Mycoplasmoidales</taxon>
        <taxon>Mycoplasmoidaceae</taxon>
        <taxon>Mycoplasmoides</taxon>
    </lineage>
</organism>
<sequence>MTAAHKQKAKLLAWLKLILWGDSISQRIFHFYIYCILLGAVLLFLPFALKTDYQKVISYEVDLQGHTISKQTASYGFLDALFLAVSAFSDTGLSTTVVSETYSVFGQTVLAILLQLGGIGFVVIAFLVWRLFKLHKKGKYSFYEKLMLQSERGGSKLGTTSEMIVVSVLFLFMVELLYGFLYTILFYFIPAFESASVFQSSGKVSNQLKALIVDSTKRLPVVHNLNLAFQYGFFHSLSAVNNAGIDLLGANSFAPYRTNWGIVIQWLAISQIIFGGIGYPVLFDAYEAIKKRRLYGKYYKHQFSLFTKLAVLTNLIVTAWCFLMLLMVEFIVITSLTNTIAHLNVEKAYLVEGLKNKSNQELQSLIFGPIPAASRVMQLWFGVISSRSAGFSVFPWSAESDIIKGIMVIAMFIGGSPSSTAGGIRTTTLAVIFLTLKAKFRGQKEVKVFKRSIDGQTVINAFLVAVFGLVSVVLIAILLPLSMQQPLSFVDSLFETTSAFGTVGLSSGATKIMALEPTRNLFNYLTLGLLMIMGQVGVSSSVLTFVKKHPQGNSFSYPREDVKVG</sequence>
<dbReference type="EMBL" id="U00089">
    <property type="protein sequence ID" value="AAB96029.1"/>
    <property type="molecule type" value="Genomic_DNA"/>
</dbReference>
<dbReference type="PIR" id="S73707">
    <property type="entry name" value="S73707"/>
</dbReference>
<dbReference type="RefSeq" id="NP_110148.1">
    <property type="nucleotide sequence ID" value="NC_000912.1"/>
</dbReference>
<dbReference type="RefSeq" id="WP_010874816.1">
    <property type="nucleotide sequence ID" value="NZ_OU342337.1"/>
</dbReference>
<dbReference type="SMR" id="P75323"/>
<dbReference type="STRING" id="272634.MPN_460"/>
<dbReference type="EnsemblBacteria" id="AAB96029">
    <property type="protein sequence ID" value="AAB96029"/>
    <property type="gene ID" value="MPN_460"/>
</dbReference>
<dbReference type="KEGG" id="mpn:MPN_460"/>
<dbReference type="PATRIC" id="fig|272634.6.peg.497"/>
<dbReference type="HOGENOM" id="CLU_026429_0_1_14"/>
<dbReference type="OrthoDB" id="9810952at2"/>
<dbReference type="BioCyc" id="MPNE272634:G1GJ3-752-MONOMER"/>
<dbReference type="Proteomes" id="UP000000808">
    <property type="component" value="Chromosome"/>
</dbReference>
<dbReference type="GO" id="GO:0005886">
    <property type="term" value="C:plasma membrane"/>
    <property type="evidence" value="ECO:0007669"/>
    <property type="project" value="UniProtKB-SubCell"/>
</dbReference>
<dbReference type="GO" id="GO:0008324">
    <property type="term" value="F:monoatomic cation transmembrane transporter activity"/>
    <property type="evidence" value="ECO:0007669"/>
    <property type="project" value="InterPro"/>
</dbReference>
<dbReference type="GO" id="GO:0030001">
    <property type="term" value="P:metal ion transport"/>
    <property type="evidence" value="ECO:0007669"/>
    <property type="project" value="UniProtKB-ARBA"/>
</dbReference>
<dbReference type="InterPro" id="IPR003445">
    <property type="entry name" value="Cat_transpt"/>
</dbReference>
<dbReference type="PANTHER" id="PTHR32024:SF1">
    <property type="entry name" value="KTR SYSTEM POTASSIUM UPTAKE PROTEIN B"/>
    <property type="match status" value="1"/>
</dbReference>
<dbReference type="PANTHER" id="PTHR32024">
    <property type="entry name" value="TRK SYSTEM POTASSIUM UPTAKE PROTEIN TRKG-RELATED"/>
    <property type="match status" value="1"/>
</dbReference>
<dbReference type="Pfam" id="PF02386">
    <property type="entry name" value="TrkH"/>
    <property type="match status" value="1"/>
</dbReference>
<evidence type="ECO:0000255" key="1"/>
<evidence type="ECO:0000305" key="2"/>
<keyword id="KW-1003">Cell membrane</keyword>
<keyword id="KW-0406">Ion transport</keyword>
<keyword id="KW-0472">Membrane</keyword>
<keyword id="KW-1185">Reference proteome</keyword>
<keyword id="KW-0812">Transmembrane</keyword>
<keyword id="KW-1133">Transmembrane helix</keyword>
<keyword id="KW-0813">Transport</keyword>